<organism>
    <name type="scientific">Staphylococcus aureus (strain MW2)</name>
    <dbReference type="NCBI Taxonomy" id="196620"/>
    <lineage>
        <taxon>Bacteria</taxon>
        <taxon>Bacillati</taxon>
        <taxon>Bacillota</taxon>
        <taxon>Bacilli</taxon>
        <taxon>Bacillales</taxon>
        <taxon>Staphylococcaceae</taxon>
        <taxon>Staphylococcus</taxon>
    </lineage>
</organism>
<name>Y401_STAAW</name>
<dbReference type="EMBL" id="BA000033">
    <property type="protein sequence ID" value="BAB94266.1"/>
    <property type="status" value="ALT_INIT"/>
    <property type="molecule type" value="Genomic_DNA"/>
</dbReference>
<dbReference type="RefSeq" id="WP_014936986.1">
    <property type="nucleotide sequence ID" value="NC_003923.1"/>
</dbReference>
<dbReference type="SMR" id="Q8NY35"/>
<dbReference type="KEGG" id="sam:MW0401"/>
<dbReference type="HOGENOM" id="CLU_071589_0_1_9"/>
<dbReference type="GO" id="GO:0005886">
    <property type="term" value="C:plasma membrane"/>
    <property type="evidence" value="ECO:0007669"/>
    <property type="project" value="UniProtKB-SubCell"/>
</dbReference>
<dbReference type="Gene3D" id="2.50.20.40">
    <property type="match status" value="1"/>
</dbReference>
<dbReference type="InterPro" id="IPR007595">
    <property type="entry name" value="Csa"/>
</dbReference>
<dbReference type="InterPro" id="IPR038641">
    <property type="entry name" value="Csa_sf"/>
</dbReference>
<dbReference type="NCBIfam" id="TIGR01742">
    <property type="entry name" value="SA_tandem_lipo"/>
    <property type="match status" value="1"/>
</dbReference>
<dbReference type="Pfam" id="PF04507">
    <property type="entry name" value="DUF576"/>
    <property type="match status" value="1"/>
</dbReference>
<dbReference type="PROSITE" id="PS51257">
    <property type="entry name" value="PROKAR_LIPOPROTEIN"/>
    <property type="match status" value="1"/>
</dbReference>
<gene>
    <name type="primary">lpl14</name>
    <name type="ordered locus">MW0401</name>
</gene>
<reference key="1">
    <citation type="journal article" date="2002" name="Lancet">
        <title>Genome and virulence determinants of high virulence community-acquired MRSA.</title>
        <authorList>
            <person name="Baba T."/>
            <person name="Takeuchi F."/>
            <person name="Kuroda M."/>
            <person name="Yuzawa H."/>
            <person name="Aoki K."/>
            <person name="Oguchi A."/>
            <person name="Nagai Y."/>
            <person name="Iwama N."/>
            <person name="Asano K."/>
            <person name="Naimi T."/>
            <person name="Kuroda H."/>
            <person name="Cui L."/>
            <person name="Yamamoto K."/>
            <person name="Hiramatsu K."/>
        </authorList>
    </citation>
    <scope>NUCLEOTIDE SEQUENCE [LARGE SCALE GENOMIC DNA]</scope>
    <source>
        <strain>MW2</strain>
    </source>
</reference>
<accession>Q8NY35</accession>
<feature type="signal peptide" evidence="1">
    <location>
        <begin position="1"/>
        <end position="22"/>
    </location>
</feature>
<feature type="chain" id="PRO_0000282182" description="Uncharacterized lipoprotein MW0401">
    <location>
        <begin position="23"/>
        <end position="270"/>
    </location>
</feature>
<feature type="lipid moiety-binding region" description="N-palmitoyl cysteine" evidence="1">
    <location>
        <position position="23"/>
    </location>
</feature>
<feature type="lipid moiety-binding region" description="S-diacylglycerol cysteine" evidence="1">
    <location>
        <position position="23"/>
    </location>
</feature>
<comment type="subcellular location">
    <subcellularLocation>
        <location evidence="1">Cell membrane</location>
        <topology evidence="1">Lipid-anchor</topology>
    </subcellularLocation>
</comment>
<comment type="similarity">
    <text evidence="2">Belongs to the staphylococcal tandem lipoprotein family.</text>
</comment>
<comment type="sequence caution" evidence="2">
    <conflict type="erroneous initiation">
        <sequence resource="EMBL-CDS" id="BAB94266"/>
    </conflict>
</comment>
<evidence type="ECO:0000255" key="1">
    <source>
        <dbReference type="PROSITE-ProRule" id="PRU00303"/>
    </source>
</evidence>
<evidence type="ECO:0000305" key="2"/>
<protein>
    <recommendedName>
        <fullName>Uncharacterized lipoprotein MW0401</fullName>
    </recommendedName>
</protein>
<proteinExistence type="inferred from homology"/>
<keyword id="KW-1003">Cell membrane</keyword>
<keyword id="KW-0449">Lipoprotein</keyword>
<keyword id="KW-0472">Membrane</keyword>
<keyword id="KW-0564">Palmitate</keyword>
<keyword id="KW-0732">Signal</keyword>
<sequence>MEYIKKIALYMSVLLLIIFIGGCGNMKDEQKKEEQTNKTDSKEEQIKKSFAKTLDMYPIKNLEDLYDKEGYRDGEFKKGDKGMWTIYTDFAKSNKADELSNEGMVLYLDRNTRTAKGHYFVKTFYEKDKFPDRKKYKVEMKNNKIILLDKVEDPKLKKRIENFKFFGQYANLKELKNYNNGDVSINENVPSYDAKFKMSNKDENVKQLRSRYNIPTDKAPVLKMHIDGNLKGSSVGYKKLEIDFSKGEKSDLSVIDSLNFQPAKVDEDER</sequence>